<reference key="1">
    <citation type="journal article" date="2003" name="Nature">
        <title>The genome sequence of Bacillus anthracis Ames and comparison to closely related bacteria.</title>
        <authorList>
            <person name="Read T.D."/>
            <person name="Peterson S.N."/>
            <person name="Tourasse N.J."/>
            <person name="Baillie L.W."/>
            <person name="Paulsen I.T."/>
            <person name="Nelson K.E."/>
            <person name="Tettelin H."/>
            <person name="Fouts D.E."/>
            <person name="Eisen J.A."/>
            <person name="Gill S.R."/>
            <person name="Holtzapple E.K."/>
            <person name="Okstad O.A."/>
            <person name="Helgason E."/>
            <person name="Rilstone J."/>
            <person name="Wu M."/>
            <person name="Kolonay J.F."/>
            <person name="Beanan M.J."/>
            <person name="Dodson R.J."/>
            <person name="Brinkac L.M."/>
            <person name="Gwinn M.L."/>
            <person name="DeBoy R.T."/>
            <person name="Madpu R."/>
            <person name="Daugherty S.C."/>
            <person name="Durkin A.S."/>
            <person name="Haft D.H."/>
            <person name="Nelson W.C."/>
            <person name="Peterson J.D."/>
            <person name="Pop M."/>
            <person name="Khouri H.M."/>
            <person name="Radune D."/>
            <person name="Benton J.L."/>
            <person name="Mahamoud Y."/>
            <person name="Jiang L."/>
            <person name="Hance I.R."/>
            <person name="Weidman J.F."/>
            <person name="Berry K.J."/>
            <person name="Plaut R.D."/>
            <person name="Wolf A.M."/>
            <person name="Watkins K.L."/>
            <person name="Nierman W.C."/>
            <person name="Hazen A."/>
            <person name="Cline R.T."/>
            <person name="Redmond C."/>
            <person name="Thwaite J.E."/>
            <person name="White O."/>
            <person name="Salzberg S.L."/>
            <person name="Thomason B."/>
            <person name="Friedlander A.M."/>
            <person name="Koehler T.M."/>
            <person name="Hanna P.C."/>
            <person name="Kolstoe A.-B."/>
            <person name="Fraser C.M."/>
        </authorList>
    </citation>
    <scope>NUCLEOTIDE SEQUENCE [LARGE SCALE GENOMIC DNA]</scope>
    <source>
        <strain>Ames / isolate Porton</strain>
    </source>
</reference>
<reference key="2">
    <citation type="submission" date="2004-01" db="EMBL/GenBank/DDBJ databases">
        <title>Complete genome sequence of Bacillus anthracis Sterne.</title>
        <authorList>
            <person name="Brettin T.S."/>
            <person name="Bruce D."/>
            <person name="Challacombe J.F."/>
            <person name="Gilna P."/>
            <person name="Han C."/>
            <person name="Hill K."/>
            <person name="Hitchcock P."/>
            <person name="Jackson P."/>
            <person name="Keim P."/>
            <person name="Longmire J."/>
            <person name="Lucas S."/>
            <person name="Okinaka R."/>
            <person name="Richardson P."/>
            <person name="Rubin E."/>
            <person name="Tice H."/>
        </authorList>
    </citation>
    <scope>NUCLEOTIDE SEQUENCE [LARGE SCALE GENOMIC DNA]</scope>
    <source>
        <strain>Sterne</strain>
    </source>
</reference>
<reference key="3">
    <citation type="journal article" date="2009" name="J. Bacteriol.">
        <title>The complete genome sequence of Bacillus anthracis Ames 'Ancestor'.</title>
        <authorList>
            <person name="Ravel J."/>
            <person name="Jiang L."/>
            <person name="Stanley S.T."/>
            <person name="Wilson M.R."/>
            <person name="Decker R.S."/>
            <person name="Read T.D."/>
            <person name="Worsham P."/>
            <person name="Keim P.S."/>
            <person name="Salzberg S.L."/>
            <person name="Fraser-Liggett C.M."/>
            <person name="Rasko D.A."/>
        </authorList>
    </citation>
    <scope>NUCLEOTIDE SEQUENCE [LARGE SCALE GENOMIC DNA]</scope>
    <source>
        <strain>Ames ancestor</strain>
    </source>
</reference>
<feature type="chain" id="PRO_0000412477" description="Malonyl-[acyl-carrier protein] O-methyltransferase">
    <location>
        <begin position="1"/>
        <end position="269"/>
    </location>
</feature>
<accession>Q81MB2</accession>
<accession>E9R8E5</accession>
<accession>E9R8E6</accession>
<accession>Q6HTR4</accession>
<accession>Q6KN02</accession>
<proteinExistence type="inferred from homology"/>
<sequence length="269" mass="31237">MINKTLLQKRFNVAAVSYDQYANVQKKMAHSLLSTLDRRYSANSSIRILELGCGTGYVTEQLSNLFPKAHITAIDFAESMIAVAKTRQNVKNVMFYCEDIERLQLEETYDVIISNATFQWLNDLKQVIRNLFHHLSIDGILLFSTFGQETFQELHTSFQRAKEEKNIQNETSIGQRFYSKNQLRHICEVETGDVHVSETCYIERFTEVREFLHSIRKVGATNSNEESYCQSPSLFRAMLRIYERDFTGNEGIMATYHALFMHITKEGKR</sequence>
<comment type="function">
    <text evidence="1">Converts the free carboxyl group of a malonyl-thioester to its methyl ester by transfer of a methyl group from S-adenosyl-L-methionine (SAM). It allows to synthesize pimeloyl-ACP via the fatty acid synthetic pathway.</text>
</comment>
<comment type="catalytic activity">
    <reaction evidence="1">
        <text>malonyl-[ACP] + S-adenosyl-L-methionine = malonyl-[ACP] methyl ester + S-adenosyl-L-homocysteine</text>
        <dbReference type="Rhea" id="RHEA:17105"/>
        <dbReference type="Rhea" id="RHEA-COMP:9623"/>
        <dbReference type="Rhea" id="RHEA-COMP:9954"/>
        <dbReference type="ChEBI" id="CHEBI:57856"/>
        <dbReference type="ChEBI" id="CHEBI:59789"/>
        <dbReference type="ChEBI" id="CHEBI:78449"/>
        <dbReference type="ChEBI" id="CHEBI:78845"/>
        <dbReference type="EC" id="2.1.1.197"/>
    </reaction>
</comment>
<comment type="pathway">
    <text evidence="1">Cofactor biosynthesis; biotin biosynthesis.</text>
</comment>
<comment type="similarity">
    <text evidence="1">Belongs to the methyltransferase superfamily.</text>
</comment>
<evidence type="ECO:0000255" key="1">
    <source>
        <dbReference type="HAMAP-Rule" id="MF_00835"/>
    </source>
</evidence>
<name>BIOC_BACAN</name>
<gene>
    <name evidence="1" type="primary">bioC</name>
    <name type="ordered locus">BA_4337</name>
    <name type="ordered locus">GBAA_4337</name>
    <name type="ordered locus">BAS4024</name>
</gene>
<protein>
    <recommendedName>
        <fullName evidence="1">Malonyl-[acyl-carrier protein] O-methyltransferase</fullName>
        <shortName evidence="1">Malonyl-ACP O-methyltransferase</shortName>
        <ecNumber evidence="1">2.1.1.197</ecNumber>
    </recommendedName>
    <alternativeName>
        <fullName evidence="1">Biotin synthesis protein BioC</fullName>
    </alternativeName>
</protein>
<dbReference type="EC" id="2.1.1.197" evidence="1"/>
<dbReference type="EMBL" id="AE016879">
    <property type="protein sequence ID" value="AAP28056.1"/>
    <property type="molecule type" value="Genomic_DNA"/>
</dbReference>
<dbReference type="EMBL" id="AE017334">
    <property type="protein sequence ID" value="AAT33458.1"/>
    <property type="molecule type" value="Genomic_DNA"/>
</dbReference>
<dbReference type="EMBL" id="AE017225">
    <property type="protein sequence ID" value="AAT56325.1"/>
    <property type="molecule type" value="Genomic_DNA"/>
</dbReference>
<dbReference type="RefSeq" id="NP_846570.1">
    <property type="nucleotide sequence ID" value="NC_003997.3"/>
</dbReference>
<dbReference type="RefSeq" id="WP_000608924.1">
    <property type="nucleotide sequence ID" value="NZ_WXXJ01000027.1"/>
</dbReference>
<dbReference type="RefSeq" id="YP_030274.1">
    <property type="nucleotide sequence ID" value="NC_005945.1"/>
</dbReference>
<dbReference type="SMR" id="Q81MB2"/>
<dbReference type="STRING" id="261594.GBAA_4337"/>
<dbReference type="DNASU" id="1087555"/>
<dbReference type="GeneID" id="45024004"/>
<dbReference type="KEGG" id="ban:BA_4337"/>
<dbReference type="KEGG" id="banh:HYU01_21185"/>
<dbReference type="KEGG" id="bar:GBAA_4337"/>
<dbReference type="KEGG" id="bat:BAS4024"/>
<dbReference type="PATRIC" id="fig|198094.11.peg.4306"/>
<dbReference type="eggNOG" id="COG4106">
    <property type="taxonomic scope" value="Bacteria"/>
</dbReference>
<dbReference type="HOGENOM" id="CLU_046586_2_3_9"/>
<dbReference type="OMA" id="SWQAVDG"/>
<dbReference type="OrthoDB" id="9760689at2"/>
<dbReference type="UniPathway" id="UPA00078"/>
<dbReference type="Proteomes" id="UP000000427">
    <property type="component" value="Chromosome"/>
</dbReference>
<dbReference type="Proteomes" id="UP000000594">
    <property type="component" value="Chromosome"/>
</dbReference>
<dbReference type="GO" id="GO:0010340">
    <property type="term" value="F:carboxyl-O-methyltransferase activity"/>
    <property type="evidence" value="ECO:0007669"/>
    <property type="project" value="UniProtKB-UniRule"/>
</dbReference>
<dbReference type="GO" id="GO:0102130">
    <property type="term" value="F:malonyl-CoA methyltransferase activity"/>
    <property type="evidence" value="ECO:0007669"/>
    <property type="project" value="UniProtKB-EC"/>
</dbReference>
<dbReference type="GO" id="GO:0009102">
    <property type="term" value="P:biotin biosynthetic process"/>
    <property type="evidence" value="ECO:0007669"/>
    <property type="project" value="UniProtKB-UniRule"/>
</dbReference>
<dbReference type="GO" id="GO:0032259">
    <property type="term" value="P:methylation"/>
    <property type="evidence" value="ECO:0007669"/>
    <property type="project" value="UniProtKB-KW"/>
</dbReference>
<dbReference type="CDD" id="cd02440">
    <property type="entry name" value="AdoMet_MTases"/>
    <property type="match status" value="1"/>
</dbReference>
<dbReference type="Gene3D" id="3.40.50.150">
    <property type="entry name" value="Vaccinia Virus protein VP39"/>
    <property type="match status" value="1"/>
</dbReference>
<dbReference type="HAMAP" id="MF_00835">
    <property type="entry name" value="BioC"/>
    <property type="match status" value="1"/>
</dbReference>
<dbReference type="InterPro" id="IPR011814">
    <property type="entry name" value="BioC"/>
</dbReference>
<dbReference type="InterPro" id="IPR025714">
    <property type="entry name" value="Methyltranfer_dom"/>
</dbReference>
<dbReference type="InterPro" id="IPR029063">
    <property type="entry name" value="SAM-dependent_MTases_sf"/>
</dbReference>
<dbReference type="NCBIfam" id="TIGR02072">
    <property type="entry name" value="BioC"/>
    <property type="match status" value="1"/>
</dbReference>
<dbReference type="PANTHER" id="PTHR43861:SF3">
    <property type="entry name" value="PUTATIVE (AFU_ORTHOLOGUE AFUA_2G14390)-RELATED"/>
    <property type="match status" value="1"/>
</dbReference>
<dbReference type="PANTHER" id="PTHR43861">
    <property type="entry name" value="TRANS-ACONITATE 2-METHYLTRANSFERASE-RELATED"/>
    <property type="match status" value="1"/>
</dbReference>
<dbReference type="Pfam" id="PF13847">
    <property type="entry name" value="Methyltransf_31"/>
    <property type="match status" value="1"/>
</dbReference>
<dbReference type="SUPFAM" id="SSF53335">
    <property type="entry name" value="S-adenosyl-L-methionine-dependent methyltransferases"/>
    <property type="match status" value="1"/>
</dbReference>
<organism>
    <name type="scientific">Bacillus anthracis</name>
    <dbReference type="NCBI Taxonomy" id="1392"/>
    <lineage>
        <taxon>Bacteria</taxon>
        <taxon>Bacillati</taxon>
        <taxon>Bacillota</taxon>
        <taxon>Bacilli</taxon>
        <taxon>Bacillales</taxon>
        <taxon>Bacillaceae</taxon>
        <taxon>Bacillus</taxon>
        <taxon>Bacillus cereus group</taxon>
    </lineage>
</organism>
<keyword id="KW-0093">Biotin biosynthesis</keyword>
<keyword id="KW-0489">Methyltransferase</keyword>
<keyword id="KW-1185">Reference proteome</keyword>
<keyword id="KW-0949">S-adenosyl-L-methionine</keyword>
<keyword id="KW-0808">Transferase</keyword>